<name>PCDA5_HUMAN</name>
<proteinExistence type="evidence at protein level"/>
<accession>Q9Y5H7</accession>
<accession>O75284</accession>
<accession>Q8N4R3</accession>
<comment type="function">
    <text>Potential calcium-dependent cell-adhesion protein. May be involved in the establishment and maintenance of specific neuronal connections in the brain.</text>
</comment>
<comment type="subcellular location">
    <subcellularLocation>
        <location evidence="1">Cell membrane</location>
        <topology evidence="1">Single-pass type I membrane protein</topology>
    </subcellularLocation>
</comment>
<comment type="alternative products">
    <event type="alternative splicing"/>
    <isoform>
        <id>Q9Y5H7-1</id>
        <name>1</name>
        <sequence type="displayed"/>
    </isoform>
    <isoform>
        <id>Q9Y5H7-2</id>
        <name>2</name>
        <sequence type="described" ref="VSP_000679 VSP_000680"/>
    </isoform>
    <isoform>
        <id>Q9Y5H7-3</id>
        <name>3</name>
        <sequence type="described" ref="VSP_008704 VSP_008705"/>
    </isoform>
</comment>
<organism>
    <name type="scientific">Homo sapiens</name>
    <name type="common">Human</name>
    <dbReference type="NCBI Taxonomy" id="9606"/>
    <lineage>
        <taxon>Eukaryota</taxon>
        <taxon>Metazoa</taxon>
        <taxon>Chordata</taxon>
        <taxon>Craniata</taxon>
        <taxon>Vertebrata</taxon>
        <taxon>Euteleostomi</taxon>
        <taxon>Mammalia</taxon>
        <taxon>Eutheria</taxon>
        <taxon>Euarchontoglires</taxon>
        <taxon>Primates</taxon>
        <taxon>Haplorrhini</taxon>
        <taxon>Catarrhini</taxon>
        <taxon>Hominidae</taxon>
        <taxon>Homo</taxon>
    </lineage>
</organism>
<gene>
    <name type="primary">PCDHA5</name>
    <name type="synonym">CNRS6</name>
</gene>
<evidence type="ECO:0000250" key="1"/>
<evidence type="ECO:0000255" key="2"/>
<evidence type="ECO:0000255" key="3">
    <source>
        <dbReference type="PROSITE-ProRule" id="PRU00043"/>
    </source>
</evidence>
<evidence type="ECO:0000256" key="4">
    <source>
        <dbReference type="SAM" id="MobiDB-lite"/>
    </source>
</evidence>
<evidence type="ECO:0000303" key="5">
    <source>
    </source>
</evidence>
<evidence type="ECO:0000303" key="6">
    <source>
    </source>
</evidence>
<evidence type="ECO:0000305" key="7"/>
<dbReference type="EMBL" id="AF152313">
    <property type="protein sequence ID" value="AAD43707.1"/>
    <property type="molecule type" value="mRNA"/>
</dbReference>
<dbReference type="EMBL" id="AF152483">
    <property type="protein sequence ID" value="AAD43744.1"/>
    <property type="molecule type" value="mRNA"/>
</dbReference>
<dbReference type="EMBL" id="AC005609">
    <property type="protein sequence ID" value="AAC34321.1"/>
    <property type="molecule type" value="Genomic_DNA"/>
</dbReference>
<dbReference type="EMBL" id="BC033735">
    <property type="protein sequence ID" value="AAH33735.1"/>
    <property type="molecule type" value="mRNA"/>
</dbReference>
<dbReference type="CCDS" id="CCDS54917.1">
    <molecule id="Q9Y5H7-1"/>
</dbReference>
<dbReference type="RefSeq" id="NP_061731.1">
    <molecule id="Q9Y5H7-1"/>
    <property type="nucleotide sequence ID" value="NM_018908.3"/>
</dbReference>
<dbReference type="RefSeq" id="NP_113689.1">
    <molecule id="Q9Y5H7-2"/>
    <property type="nucleotide sequence ID" value="NM_031501.2"/>
</dbReference>
<dbReference type="SMR" id="Q9Y5H7"/>
<dbReference type="BioGRID" id="121083">
    <property type="interactions" value="3"/>
</dbReference>
<dbReference type="FunCoup" id="Q9Y5H7">
    <property type="interactions" value="18"/>
</dbReference>
<dbReference type="IntAct" id="Q9Y5H7">
    <property type="interactions" value="2"/>
</dbReference>
<dbReference type="STRING" id="9606.ENSP00000436557"/>
<dbReference type="GlyCosmos" id="Q9Y5H7">
    <property type="glycosylation" value="2 sites, No reported glycans"/>
</dbReference>
<dbReference type="GlyGen" id="Q9Y5H7">
    <property type="glycosylation" value="2 sites"/>
</dbReference>
<dbReference type="iPTMnet" id="Q9Y5H7"/>
<dbReference type="PhosphoSitePlus" id="Q9Y5H7"/>
<dbReference type="BioMuta" id="PCDHA5"/>
<dbReference type="DMDM" id="13878428"/>
<dbReference type="jPOST" id="Q9Y5H7"/>
<dbReference type="MassIVE" id="Q9Y5H7"/>
<dbReference type="PaxDb" id="9606-ENSP00000436557"/>
<dbReference type="PeptideAtlas" id="Q9Y5H7"/>
<dbReference type="ProteomicsDB" id="86396">
    <molecule id="Q9Y5H7-1"/>
</dbReference>
<dbReference type="ProteomicsDB" id="86397">
    <molecule id="Q9Y5H7-2"/>
</dbReference>
<dbReference type="ProteomicsDB" id="86398">
    <molecule id="Q9Y5H7-3"/>
</dbReference>
<dbReference type="Antibodypedia" id="27127">
    <property type="antibodies" value="137 antibodies from 22 providers"/>
</dbReference>
<dbReference type="DNASU" id="56143"/>
<dbReference type="Ensembl" id="ENST00000529619.5">
    <molecule id="Q9Y5H7-3"/>
    <property type="protein sequence ID" value="ENSP00000433416.1"/>
    <property type="gene ID" value="ENSG00000204965.9"/>
</dbReference>
<dbReference type="Ensembl" id="ENST00000529859.2">
    <molecule id="Q9Y5H7-1"/>
    <property type="protein sequence ID" value="ENSP00000436557.1"/>
    <property type="gene ID" value="ENSG00000204965.9"/>
</dbReference>
<dbReference type="Ensembl" id="ENST00000614258.1">
    <molecule id="Q9Y5H7-2"/>
    <property type="protein sequence ID" value="ENSP00000484128.1"/>
    <property type="gene ID" value="ENSG00000204965.9"/>
</dbReference>
<dbReference type="Ensembl" id="ENST00000708298.1">
    <molecule id="Q9Y5H7-2"/>
    <property type="protein sequence ID" value="ENSP00000517149.1"/>
    <property type="gene ID" value="ENSG00000291653.1"/>
</dbReference>
<dbReference type="Ensembl" id="ENST00000708299.1">
    <molecule id="Q9Y5H7-1"/>
    <property type="protein sequence ID" value="ENSP00000517150.1"/>
    <property type="gene ID" value="ENSG00000291653.1"/>
</dbReference>
<dbReference type="Ensembl" id="ENST00000708300.1">
    <molecule id="Q9Y5H7-3"/>
    <property type="protein sequence ID" value="ENSP00000517151.1"/>
    <property type="gene ID" value="ENSG00000291653.1"/>
</dbReference>
<dbReference type="GeneID" id="56143"/>
<dbReference type="KEGG" id="hsa:56143"/>
<dbReference type="MANE-Select" id="ENST00000529859.2">
    <property type="protein sequence ID" value="ENSP00000436557.1"/>
    <property type="RefSeq nucleotide sequence ID" value="NM_018908.3"/>
    <property type="RefSeq protein sequence ID" value="NP_061731.1"/>
</dbReference>
<dbReference type="UCSC" id="uc003lhj.2">
    <molecule id="Q9Y5H7-1"/>
    <property type="organism name" value="human"/>
</dbReference>
<dbReference type="AGR" id="HGNC:8671"/>
<dbReference type="CTD" id="56143"/>
<dbReference type="DisGeNET" id="56143"/>
<dbReference type="GeneCards" id="PCDHA5"/>
<dbReference type="HGNC" id="HGNC:8671">
    <property type="gene designation" value="PCDHA5"/>
</dbReference>
<dbReference type="HPA" id="ENSG00000204965">
    <property type="expression patterns" value="Tissue enriched (brain)"/>
</dbReference>
<dbReference type="MalaCards" id="PCDHA5"/>
<dbReference type="MIM" id="604966">
    <property type="type" value="gene"/>
</dbReference>
<dbReference type="MIM" id="606311">
    <property type="type" value="gene"/>
</dbReference>
<dbReference type="neXtProt" id="NX_Q9Y5H7"/>
<dbReference type="OpenTargets" id="ENSG00000204965"/>
<dbReference type="PharmGKB" id="PA33017"/>
<dbReference type="VEuPathDB" id="HostDB:ENSG00000204965"/>
<dbReference type="eggNOG" id="KOG3594">
    <property type="taxonomic scope" value="Eukaryota"/>
</dbReference>
<dbReference type="GeneTree" id="ENSGT00940000164408"/>
<dbReference type="HOGENOM" id="CLU_006480_3_0_1"/>
<dbReference type="InParanoid" id="Q9Y5H7"/>
<dbReference type="OMA" id="LDYEDCK"/>
<dbReference type="OrthoDB" id="6252479at2759"/>
<dbReference type="PAN-GO" id="Q9Y5H7">
    <property type="GO annotations" value="2 GO annotations based on evolutionary models"/>
</dbReference>
<dbReference type="PhylomeDB" id="Q9Y5H7"/>
<dbReference type="TreeFam" id="TF332299"/>
<dbReference type="PathwayCommons" id="Q9Y5H7"/>
<dbReference type="SignaLink" id="Q9Y5H7"/>
<dbReference type="SIGNOR" id="Q9Y5H7"/>
<dbReference type="BioGRID-ORCS" id="56143">
    <property type="hits" value="9 hits in 1100 CRISPR screens"/>
</dbReference>
<dbReference type="GeneWiki" id="PCDHA5"/>
<dbReference type="GenomeRNAi" id="56143"/>
<dbReference type="Pharos" id="Q9Y5H7">
    <property type="development level" value="Tdark"/>
</dbReference>
<dbReference type="PRO" id="PR:Q9Y5H7"/>
<dbReference type="Proteomes" id="UP000005640">
    <property type="component" value="Chromosome 5"/>
</dbReference>
<dbReference type="RNAct" id="Q9Y5H7">
    <property type="molecule type" value="protein"/>
</dbReference>
<dbReference type="Bgee" id="ENSG00000204965">
    <property type="expression patterns" value="Expressed in prefrontal cortex and 35 other cell types or tissues"/>
</dbReference>
<dbReference type="GO" id="GO:0005886">
    <property type="term" value="C:plasma membrane"/>
    <property type="evidence" value="ECO:0000318"/>
    <property type="project" value="GO_Central"/>
</dbReference>
<dbReference type="GO" id="GO:0005509">
    <property type="term" value="F:calcium ion binding"/>
    <property type="evidence" value="ECO:0007669"/>
    <property type="project" value="InterPro"/>
</dbReference>
<dbReference type="GO" id="GO:0007155">
    <property type="term" value="P:cell adhesion"/>
    <property type="evidence" value="ECO:0000318"/>
    <property type="project" value="GO_Central"/>
</dbReference>
<dbReference type="GO" id="GO:0007156">
    <property type="term" value="P:homophilic cell adhesion via plasma membrane adhesion molecules"/>
    <property type="evidence" value="ECO:0007669"/>
    <property type="project" value="InterPro"/>
</dbReference>
<dbReference type="GO" id="GO:0007399">
    <property type="term" value="P:nervous system development"/>
    <property type="evidence" value="ECO:0000304"/>
    <property type="project" value="ProtInc"/>
</dbReference>
<dbReference type="CDD" id="cd11304">
    <property type="entry name" value="Cadherin_repeat"/>
    <property type="match status" value="6"/>
</dbReference>
<dbReference type="FunFam" id="2.60.40.60:FF:000001">
    <property type="entry name" value="Protocadherin alpha 2"/>
    <property type="match status" value="1"/>
</dbReference>
<dbReference type="FunFam" id="2.60.40.60:FF:000002">
    <property type="entry name" value="Protocadherin alpha 2"/>
    <property type="match status" value="1"/>
</dbReference>
<dbReference type="FunFam" id="2.60.40.60:FF:000003">
    <property type="entry name" value="Protocadherin alpha 2"/>
    <property type="match status" value="1"/>
</dbReference>
<dbReference type="FunFam" id="2.60.40.60:FF:000006">
    <property type="entry name" value="Protocadherin alpha 2"/>
    <property type="match status" value="1"/>
</dbReference>
<dbReference type="FunFam" id="2.60.40.60:FF:000007">
    <property type="entry name" value="Protocadherin alpha 2"/>
    <property type="match status" value="1"/>
</dbReference>
<dbReference type="FunFam" id="2.60.40.60:FF:000076">
    <property type="entry name" value="Protocadherin alpha 2"/>
    <property type="match status" value="1"/>
</dbReference>
<dbReference type="Gene3D" id="2.60.40.60">
    <property type="entry name" value="Cadherins"/>
    <property type="match status" value="6"/>
</dbReference>
<dbReference type="InterPro" id="IPR002126">
    <property type="entry name" value="Cadherin-like_dom"/>
</dbReference>
<dbReference type="InterPro" id="IPR015919">
    <property type="entry name" value="Cadherin-like_sf"/>
</dbReference>
<dbReference type="InterPro" id="IPR031904">
    <property type="entry name" value="Cadherin_CBD"/>
</dbReference>
<dbReference type="InterPro" id="IPR020894">
    <property type="entry name" value="Cadherin_CS"/>
</dbReference>
<dbReference type="InterPro" id="IPR013164">
    <property type="entry name" value="Cadherin_N"/>
</dbReference>
<dbReference type="InterPro" id="IPR050174">
    <property type="entry name" value="Protocadherin/Cadherin-CA"/>
</dbReference>
<dbReference type="PANTHER" id="PTHR24028">
    <property type="entry name" value="CADHERIN-87A"/>
    <property type="match status" value="1"/>
</dbReference>
<dbReference type="PANTHER" id="PTHR24028:SF111">
    <property type="entry name" value="PROTOCADHERIN ALPHA-5"/>
    <property type="match status" value="1"/>
</dbReference>
<dbReference type="Pfam" id="PF00028">
    <property type="entry name" value="Cadherin"/>
    <property type="match status" value="5"/>
</dbReference>
<dbReference type="Pfam" id="PF08266">
    <property type="entry name" value="Cadherin_2"/>
    <property type="match status" value="1"/>
</dbReference>
<dbReference type="Pfam" id="PF15974">
    <property type="entry name" value="Cadherin_tail"/>
    <property type="match status" value="1"/>
</dbReference>
<dbReference type="PRINTS" id="PR00205">
    <property type="entry name" value="CADHERIN"/>
</dbReference>
<dbReference type="SMART" id="SM00112">
    <property type="entry name" value="CA"/>
    <property type="match status" value="6"/>
</dbReference>
<dbReference type="SUPFAM" id="SSF49313">
    <property type="entry name" value="Cadherin-like"/>
    <property type="match status" value="6"/>
</dbReference>
<dbReference type="PROSITE" id="PS00232">
    <property type="entry name" value="CADHERIN_1"/>
    <property type="match status" value="5"/>
</dbReference>
<dbReference type="PROSITE" id="PS50268">
    <property type="entry name" value="CADHERIN_2"/>
    <property type="match status" value="6"/>
</dbReference>
<protein>
    <recommendedName>
        <fullName>Protocadherin alpha-5</fullName>
        <shortName>PCDH-alpha-5</shortName>
    </recommendedName>
</protein>
<keyword id="KW-0025">Alternative splicing</keyword>
<keyword id="KW-0106">Calcium</keyword>
<keyword id="KW-0130">Cell adhesion</keyword>
<keyword id="KW-1003">Cell membrane</keyword>
<keyword id="KW-0325">Glycoprotein</keyword>
<keyword id="KW-0472">Membrane</keyword>
<keyword id="KW-1267">Proteomics identification</keyword>
<keyword id="KW-1185">Reference proteome</keyword>
<keyword id="KW-0677">Repeat</keyword>
<keyword id="KW-0732">Signal</keyword>
<keyword id="KW-0812">Transmembrane</keyword>
<keyword id="KW-1133">Transmembrane helix</keyword>
<sequence>MVYSRRGSLGSRLLLLWLLLAYWKAGSGQLHYSIPEEAKHGTFVGRIAQDLGLELAELVPRLFRVASKGRGDLLEVNLQNGILFVNSRIDREELCRRRAECSIHLEVIVDRPLQVFHVEVAVKDINDNPPRFSRQEQRLFILESRMPDSRFPLEGASDLDIGANAQLRYRLNPNEYFDLDVKTNEEETNFLELVLRKSLDREETQEHRLLVIATDGGKPELTGTVQLLINVLDANDNAPEFDKSIYNVRLLENAPSGTLVIKLNASDADEGINKEIVYFFSNLVLDDVKSKFIINSNTGEIKVNGELDYEDYNSYEINIDAMDKSTFPLSGHCKVVVKLLDVNDNTPEMAITTLFLPVKEDAPLSTVIALISVSDRDSGANGQVTCSLMPHVPFKLVSTFKNYYSLVLDSALDRESVSVYELVVTARDGGSPSLWATASVSVEVADVNDNAPAFAQPQYTVFVKENNPPGCHIFTVSARDADAQENALVSYSLVERRVGERPLSSYVSVHAESGKVYALQPLDHEEVELLQFQVSARDAGVPPLGSNVTLQVFVLDENDNAPALLVPRVGGTGGAVSELVPRSVGAGHVVAKVRAVDPDSGYNAWLSYELQPAPGSARIPFRVGLYTGEISTTRSLDETEAPRHRLLVLVKDHGEPPLTATATVLVSLVESGQAPKASSRASAGAVGPEAALVDVNVYLIIAICAVSSLLVLTLLLYTALRCSAQPTEAVCTRGKPTLLCSSAVGSWSYSQQRRQRVCSGEAPPKTDLMAFSPSLPQGPTSTDNPRQPNPDWRYSASLRAGMHSSVHLEEAGILRAGPGGPDQQWPTVSSATPEPEAGEVSPPVGAGVNSNSWTFKYGPGNPKQSGPGELPDKFIIPGSPAIISIRQEPTNSQIDKSDFITFGKKEETKKKKKKKKGNKTQEKKEKGNSTTDNSDQ</sequence>
<reference key="1">
    <citation type="journal article" date="1999" name="Cell">
        <title>A striking organization of a large family of human neural cadherin-like cell adhesion genes.</title>
        <authorList>
            <person name="Wu Q."/>
            <person name="Maniatis T."/>
        </authorList>
    </citation>
    <scope>NUCLEOTIDE SEQUENCE [MRNA] (ISOFORMS 1 AND 2)</scope>
    <source>
        <tissue>Brain</tissue>
    </source>
</reference>
<reference key="2">
    <citation type="journal article" date="2004" name="Nature">
        <title>The DNA sequence and comparative analysis of human chromosome 5.</title>
        <authorList>
            <person name="Schmutz J."/>
            <person name="Martin J."/>
            <person name="Terry A."/>
            <person name="Couronne O."/>
            <person name="Grimwood J."/>
            <person name="Lowry S."/>
            <person name="Gordon L.A."/>
            <person name="Scott D."/>
            <person name="Xie G."/>
            <person name="Huang W."/>
            <person name="Hellsten U."/>
            <person name="Tran-Gyamfi M."/>
            <person name="She X."/>
            <person name="Prabhakar S."/>
            <person name="Aerts A."/>
            <person name="Altherr M."/>
            <person name="Bajorek E."/>
            <person name="Black S."/>
            <person name="Branscomb E."/>
            <person name="Caoile C."/>
            <person name="Challacombe J.F."/>
            <person name="Chan Y.M."/>
            <person name="Denys M."/>
            <person name="Detter J.C."/>
            <person name="Escobar J."/>
            <person name="Flowers D."/>
            <person name="Fotopulos D."/>
            <person name="Glavina T."/>
            <person name="Gomez M."/>
            <person name="Gonzales E."/>
            <person name="Goodstein D."/>
            <person name="Grigoriev I."/>
            <person name="Groza M."/>
            <person name="Hammon N."/>
            <person name="Hawkins T."/>
            <person name="Haydu L."/>
            <person name="Israni S."/>
            <person name="Jett J."/>
            <person name="Kadner K."/>
            <person name="Kimball H."/>
            <person name="Kobayashi A."/>
            <person name="Lopez F."/>
            <person name="Lou Y."/>
            <person name="Martinez D."/>
            <person name="Medina C."/>
            <person name="Morgan J."/>
            <person name="Nandkeshwar R."/>
            <person name="Noonan J.P."/>
            <person name="Pitluck S."/>
            <person name="Pollard M."/>
            <person name="Predki P."/>
            <person name="Priest J."/>
            <person name="Ramirez L."/>
            <person name="Retterer J."/>
            <person name="Rodriguez A."/>
            <person name="Rogers S."/>
            <person name="Salamov A."/>
            <person name="Salazar A."/>
            <person name="Thayer N."/>
            <person name="Tice H."/>
            <person name="Tsai M."/>
            <person name="Ustaszewska A."/>
            <person name="Vo N."/>
            <person name="Wheeler J."/>
            <person name="Wu K."/>
            <person name="Yang J."/>
            <person name="Dickson M."/>
            <person name="Cheng J.-F."/>
            <person name="Eichler E.E."/>
            <person name="Olsen A."/>
            <person name="Pennacchio L.A."/>
            <person name="Rokhsar D.S."/>
            <person name="Richardson P."/>
            <person name="Lucas S.M."/>
            <person name="Myers R.M."/>
            <person name="Rubin E.M."/>
        </authorList>
    </citation>
    <scope>NUCLEOTIDE SEQUENCE [LARGE SCALE GENOMIC DNA]</scope>
</reference>
<reference key="3">
    <citation type="journal article" date="2004" name="Genome Res.">
        <title>The status, quality, and expansion of the NIH full-length cDNA project: the Mammalian Gene Collection (MGC).</title>
        <authorList>
            <consortium name="The MGC Project Team"/>
        </authorList>
    </citation>
    <scope>NUCLEOTIDE SEQUENCE [LARGE SCALE MRNA] (ISOFORM 3)</scope>
    <source>
        <tissue>Brain</tissue>
        <tissue>Lung</tissue>
    </source>
</reference>
<feature type="signal peptide" evidence="2">
    <location>
        <begin position="1"/>
        <end position="28"/>
    </location>
</feature>
<feature type="chain" id="PRO_0000003892" description="Protocadherin alpha-5">
    <location>
        <begin position="29"/>
        <end position="936"/>
    </location>
</feature>
<feature type="topological domain" description="Extracellular" evidence="2">
    <location>
        <begin position="29"/>
        <end position="696"/>
    </location>
</feature>
<feature type="transmembrane region" description="Helical" evidence="2">
    <location>
        <begin position="697"/>
        <end position="717"/>
    </location>
</feature>
<feature type="topological domain" description="Cytoplasmic" evidence="2">
    <location>
        <begin position="718"/>
        <end position="936"/>
    </location>
</feature>
<feature type="domain" description="Cadherin 1" evidence="3">
    <location>
        <begin position="33"/>
        <end position="132"/>
    </location>
</feature>
<feature type="domain" description="Cadherin 2" evidence="3">
    <location>
        <begin position="156"/>
        <end position="241"/>
    </location>
</feature>
<feature type="domain" description="Cadherin 3" evidence="3">
    <location>
        <begin position="242"/>
        <end position="349"/>
    </location>
</feature>
<feature type="domain" description="Cadherin 4" evidence="3">
    <location>
        <begin position="350"/>
        <end position="454"/>
    </location>
</feature>
<feature type="domain" description="Cadherin 5" evidence="3">
    <location>
        <begin position="455"/>
        <end position="564"/>
    </location>
</feature>
<feature type="domain" description="Cadherin 6" evidence="3">
    <location>
        <begin position="580"/>
        <end position="677"/>
    </location>
</feature>
<feature type="repeat" description="PXXP 1">
    <location>
        <begin position="773"/>
        <end position="776"/>
    </location>
</feature>
<feature type="repeat" description="PXXP 2">
    <location>
        <begin position="785"/>
        <end position="788"/>
    </location>
</feature>
<feature type="repeat" description="PXXP 3">
    <location>
        <begin position="818"/>
        <end position="821"/>
    </location>
</feature>
<feature type="repeat" description="PXXP 4">
    <location>
        <begin position="873"/>
        <end position="876"/>
    </location>
</feature>
<feature type="repeat" description="PXXP 5">
    <location>
        <begin position="877"/>
        <end position="890"/>
    </location>
</feature>
<feature type="region of interest" description="Disordered" evidence="4">
    <location>
        <begin position="759"/>
        <end position="793"/>
    </location>
</feature>
<feature type="region of interest" description="5 X 4 AA repeats of P-X-X-P">
    <location>
        <begin position="773"/>
        <end position="890"/>
    </location>
</feature>
<feature type="region of interest" description="Disordered" evidence="4">
    <location>
        <begin position="816"/>
        <end position="936"/>
    </location>
</feature>
<feature type="compositionally biased region" description="Polar residues" evidence="4">
    <location>
        <begin position="774"/>
        <end position="786"/>
    </location>
</feature>
<feature type="compositionally biased region" description="Basic and acidic residues" evidence="4">
    <location>
        <begin position="895"/>
        <end position="909"/>
    </location>
</feature>
<feature type="glycosylation site" description="N-linked (GlcNAc...) asparagine" evidence="2">
    <location>
        <position position="264"/>
    </location>
</feature>
<feature type="glycosylation site" description="N-linked (GlcNAc...) asparagine" evidence="2">
    <location>
        <position position="547"/>
    </location>
</feature>
<feature type="splice variant" id="VSP_000679" description="In isoform 2." evidence="5">
    <original>PRQPNPDWRYSASLRAGMHSSVHLEEAGILRA</original>
    <variation>VSFLILTSIFPSQFSNIKCHIHPLFLYLKIMS</variation>
    <location>
        <begin position="785"/>
        <end position="816"/>
    </location>
</feature>
<feature type="splice variant" id="VSP_000680" description="In isoform 2." evidence="5">
    <location>
        <begin position="817"/>
        <end position="936"/>
    </location>
</feature>
<feature type="splice variant" id="VSP_008704" description="In isoform 3." evidence="6">
    <original>GELPDKFIIPGSPAIISIRQEPT</original>
    <variation>EPKKQTQVSFLLRRKGEASQPRQ</variation>
    <location>
        <begin position="868"/>
        <end position="890"/>
    </location>
</feature>
<feature type="splice variant" id="VSP_008705" description="In isoform 3." evidence="6">
    <location>
        <begin position="891"/>
        <end position="936"/>
    </location>
</feature>
<feature type="sequence variant" id="VAR_048526" description="In dbSNP:rs4141841.">
    <original>A</original>
    <variation>V</variation>
    <location>
        <position position="691"/>
    </location>
</feature>
<feature type="sequence conflict" description="In Ref. 3; AAH33735." evidence="7" ref="3">
    <original>N</original>
    <variation>S</variation>
    <location>
        <position position="237"/>
    </location>
</feature>